<feature type="signal peptide" evidence="1">
    <location>
        <begin position="1"/>
        <end position="27"/>
    </location>
</feature>
<feature type="chain" id="PRO_0000295610" description="Photosystem II extrinsic protein V">
    <location>
        <begin position="28"/>
        <end position="164"/>
    </location>
</feature>
<feature type="binding site" description="covalent" evidence="1">
    <location>
        <position position="64"/>
    </location>
    <ligand>
        <name>heme c</name>
        <dbReference type="ChEBI" id="CHEBI:61717"/>
    </ligand>
</feature>
<feature type="binding site" description="covalent" evidence="1">
    <location>
        <position position="67"/>
    </location>
    <ligand>
        <name>heme c</name>
        <dbReference type="ChEBI" id="CHEBI:61717"/>
    </ligand>
</feature>
<feature type="binding site" description="axial binding residue" evidence="1">
    <location>
        <position position="68"/>
    </location>
    <ligand>
        <name>heme c</name>
        <dbReference type="ChEBI" id="CHEBI:61717"/>
    </ligand>
    <ligandPart>
        <name>Fe</name>
        <dbReference type="ChEBI" id="CHEBI:18248"/>
    </ligandPart>
</feature>
<feature type="binding site" description="axial binding residue" evidence="1">
    <location>
        <position position="119"/>
    </location>
    <ligand>
        <name>heme c</name>
        <dbReference type="ChEBI" id="CHEBI:61717"/>
    </ligand>
    <ligandPart>
        <name>Fe</name>
        <dbReference type="ChEBI" id="CHEBI:18248"/>
    </ligandPart>
</feature>
<comment type="function">
    <text evidence="1">One of the extrinsic, lumenal subunits of photosystem II (PSII). PSII is a light-driven water plastoquinone oxidoreductase, using light energy to abstract electrons from H(2)O, generating a proton gradient subsequently used for ATP formation. The extrinsic proteins stabilize the structure of photosystem II oxygen-evolving complex (OEC), the ion environment of oxygen evolution and protect the OEC against heat-induced inactivation.</text>
</comment>
<comment type="cofactor">
    <cofactor evidence="1">
        <name>heme c</name>
        <dbReference type="ChEBI" id="CHEBI:61717"/>
    </cofactor>
    <text evidence="1">Binds 1 heme c group covalently per subunit.</text>
</comment>
<comment type="subunit">
    <text evidence="1">PSII is composed of 1 copy each of membrane proteins PsbA, PsbB, PsbC, PsbD, PsbE, PsbF, PsbH, PsbI, PsbJ, PsbK, PsbL, PsbM, PsbT, PsbY, PsbZ, Psb30/Ycf12, at least 3 peripheral proteins of the oxygen-evolving complex and a large number of cofactors. It forms dimeric complexes.</text>
</comment>
<comment type="subcellular location">
    <subcellularLocation>
        <location evidence="1">Plastid</location>
        <location evidence="1">Chloroplast thylakoid membrane</location>
        <topology evidence="1">Peripheral membrane protein</topology>
        <orientation evidence="1">Lumenal side</orientation>
    </subcellularLocation>
    <text evidence="1">Associated with photosystem II at the lumenal side of the thylakoid membrane.</text>
</comment>
<comment type="similarity">
    <text evidence="1">Belongs to the cytochrome c family. PsbV subfamily.</text>
</comment>
<dbReference type="EMBL" id="AY741371">
    <property type="protein sequence ID" value="AAX13898.1"/>
    <property type="molecule type" value="Genomic_DNA"/>
</dbReference>
<dbReference type="RefSeq" id="YP_277399.1">
    <property type="nucleotide sequence ID" value="NC_007288.1"/>
</dbReference>
<dbReference type="SMR" id="Q4G368"/>
<dbReference type="STRING" id="2903.Q4G368"/>
<dbReference type="GeneID" id="3562484"/>
<dbReference type="GO" id="GO:0009535">
    <property type="term" value="C:chloroplast thylakoid membrane"/>
    <property type="evidence" value="ECO:0007669"/>
    <property type="project" value="UniProtKB-SubCell"/>
</dbReference>
<dbReference type="GO" id="GO:0009523">
    <property type="term" value="C:photosystem II"/>
    <property type="evidence" value="ECO:0007669"/>
    <property type="project" value="UniProtKB-KW"/>
</dbReference>
<dbReference type="GO" id="GO:0009055">
    <property type="term" value="F:electron transfer activity"/>
    <property type="evidence" value="ECO:0007669"/>
    <property type="project" value="InterPro"/>
</dbReference>
<dbReference type="GO" id="GO:0020037">
    <property type="term" value="F:heme binding"/>
    <property type="evidence" value="ECO:0007669"/>
    <property type="project" value="InterPro"/>
</dbReference>
<dbReference type="GO" id="GO:0005506">
    <property type="term" value="F:iron ion binding"/>
    <property type="evidence" value="ECO:0007669"/>
    <property type="project" value="InterPro"/>
</dbReference>
<dbReference type="GO" id="GO:0019684">
    <property type="term" value="P:photosynthesis, light reaction"/>
    <property type="evidence" value="ECO:0007669"/>
    <property type="project" value="UniProtKB-UniRule"/>
</dbReference>
<dbReference type="GO" id="GO:0022904">
    <property type="term" value="P:respiratory electron transport chain"/>
    <property type="evidence" value="ECO:0007669"/>
    <property type="project" value="InterPro"/>
</dbReference>
<dbReference type="Gene3D" id="1.10.760.10">
    <property type="entry name" value="Cytochrome c-like domain"/>
    <property type="match status" value="1"/>
</dbReference>
<dbReference type="HAMAP" id="MF_01378">
    <property type="entry name" value="PSII_Cyt550"/>
    <property type="match status" value="1"/>
</dbReference>
<dbReference type="InterPro" id="IPR009056">
    <property type="entry name" value="Cyt_c-like_dom"/>
</dbReference>
<dbReference type="InterPro" id="IPR036909">
    <property type="entry name" value="Cyt_c-like_dom_sf"/>
</dbReference>
<dbReference type="InterPro" id="IPR029490">
    <property type="entry name" value="Cytochrom_C550"/>
</dbReference>
<dbReference type="InterPro" id="IPR017851">
    <property type="entry name" value="PsbV_cyt_c550"/>
</dbReference>
<dbReference type="InterPro" id="IPR016003">
    <property type="entry name" value="PsbV_cyt_c550-like"/>
</dbReference>
<dbReference type="NCBIfam" id="TIGR03045">
    <property type="entry name" value="PS_II_C550"/>
    <property type="match status" value="1"/>
</dbReference>
<dbReference type="Pfam" id="PF14495">
    <property type="entry name" value="Cytochrom_C550"/>
    <property type="match status" value="1"/>
</dbReference>
<dbReference type="PIRSF" id="PIRSF005890">
    <property type="entry name" value="Phot_II_cyt_c550"/>
    <property type="match status" value="1"/>
</dbReference>
<dbReference type="SUPFAM" id="SSF46626">
    <property type="entry name" value="Cytochrome c"/>
    <property type="match status" value="1"/>
</dbReference>
<dbReference type="PROSITE" id="PS51007">
    <property type="entry name" value="CYTC"/>
    <property type="match status" value="1"/>
</dbReference>
<protein>
    <recommendedName>
        <fullName evidence="1">Photosystem II extrinsic protein V</fullName>
        <shortName evidence="1">PsbV</shortName>
    </recommendedName>
    <alternativeName>
        <fullName evidence="1">Cytochrome c-550</fullName>
    </alternativeName>
    <alternativeName>
        <fullName evidence="1">Cytochrome c550</fullName>
    </alternativeName>
</protein>
<proteinExistence type="inferred from homology"/>
<accession>Q4G368</accession>
<geneLocation type="chloroplast"/>
<organism>
    <name type="scientific">Emiliania huxleyi</name>
    <name type="common">Coccolithophore</name>
    <name type="synonym">Pontosphaera huxleyi</name>
    <dbReference type="NCBI Taxonomy" id="2903"/>
    <lineage>
        <taxon>Eukaryota</taxon>
        <taxon>Haptista</taxon>
        <taxon>Haptophyta</taxon>
        <taxon>Prymnesiophyceae</taxon>
        <taxon>Isochrysidales</taxon>
        <taxon>Noelaerhabdaceae</taxon>
        <taxon>Emiliania</taxon>
    </lineage>
</organism>
<keyword id="KW-0150">Chloroplast</keyword>
<keyword id="KW-0249">Electron transport</keyword>
<keyword id="KW-0349">Heme</keyword>
<keyword id="KW-0408">Iron</keyword>
<keyword id="KW-0472">Membrane</keyword>
<keyword id="KW-0479">Metal-binding</keyword>
<keyword id="KW-0602">Photosynthesis</keyword>
<keyword id="KW-0604">Photosystem II</keyword>
<keyword id="KW-0934">Plastid</keyword>
<keyword id="KW-0732">Signal</keyword>
<keyword id="KW-0793">Thylakoid</keyword>
<keyword id="KW-0813">Transport</keyword>
<gene>
    <name evidence="1" type="primary">psbV</name>
</gene>
<name>CY550_EMIHU</name>
<evidence type="ECO:0000255" key="1">
    <source>
        <dbReference type="HAMAP-Rule" id="MF_01378"/>
    </source>
</evidence>
<reference key="1">
    <citation type="journal article" date="2005" name="DNA Res.">
        <title>The complete plastid genome sequence of the haptophyte Emiliania huxleyi: a comparison to other plastid genomes.</title>
        <authorList>
            <person name="Sanchez-Puerta M.V."/>
            <person name="Bachvaroff T.R."/>
            <person name="Delwiche C.F."/>
        </authorList>
    </citation>
    <scope>NUCLEOTIDE SEQUENCE [LARGE SCALE GENOMIC DNA]</scope>
    <source>
        <strain>CCMP373 / CSIRO-CS-57 / BT6</strain>
    </source>
</reference>
<sequence length="164" mass="17709">MALKSKFLVGSILATFILNGFSSPAQALELDEDTRTVTLDGKGNTVVLSVEQIKRGKRLFNNACAICHVGGLTKTNPNVGLDVEALSLATPPRDNVSSLVSYLKDPMTYDGADSIAELHPSIKSADIFPKMRSLTDEDLFAISGHILVQPKVVNEKWGGGKIYY</sequence>